<sequence length="75" mass="8459">MKAEIHPDYHTIKVVMTDGTEYLTRSTWGKDGDTMNLDIDSKSHPAWTGGSQQILDRGGRVSRFQKKFSGFLKKG</sequence>
<evidence type="ECO:0000255" key="1">
    <source>
        <dbReference type="HAMAP-Rule" id="MF_00501"/>
    </source>
</evidence>
<evidence type="ECO:0000305" key="2"/>
<name>RL31_NITWN</name>
<feature type="chain" id="PRO_0000259200" description="Large ribosomal subunit protein bL31">
    <location>
        <begin position="1"/>
        <end position="75"/>
    </location>
</feature>
<reference key="1">
    <citation type="journal article" date="2006" name="Appl. Environ. Microbiol.">
        <title>Genome sequence of the chemolithoautotrophic nitrite-oxidizing bacterium Nitrobacter winogradskyi Nb-255.</title>
        <authorList>
            <person name="Starkenburg S.R."/>
            <person name="Chain P.S.G."/>
            <person name="Sayavedra-Soto L.A."/>
            <person name="Hauser L."/>
            <person name="Land M.L."/>
            <person name="Larimer F.W."/>
            <person name="Malfatti S.A."/>
            <person name="Klotz M.G."/>
            <person name="Bottomley P.J."/>
            <person name="Arp D.J."/>
            <person name="Hickey W.J."/>
        </authorList>
    </citation>
    <scope>NUCLEOTIDE SEQUENCE [LARGE SCALE GENOMIC DNA]</scope>
    <source>
        <strain>ATCC 25391 / DSM 10237 / CIP 104748 / NCIMB 11846 / Nb-255</strain>
    </source>
</reference>
<organism>
    <name type="scientific">Nitrobacter winogradskyi (strain ATCC 25391 / DSM 10237 / CIP 104748 / NCIMB 11846 / Nb-255)</name>
    <dbReference type="NCBI Taxonomy" id="323098"/>
    <lineage>
        <taxon>Bacteria</taxon>
        <taxon>Pseudomonadati</taxon>
        <taxon>Pseudomonadota</taxon>
        <taxon>Alphaproteobacteria</taxon>
        <taxon>Hyphomicrobiales</taxon>
        <taxon>Nitrobacteraceae</taxon>
        <taxon>Nitrobacter</taxon>
    </lineage>
</organism>
<keyword id="KW-1185">Reference proteome</keyword>
<keyword id="KW-0687">Ribonucleoprotein</keyword>
<keyword id="KW-0689">Ribosomal protein</keyword>
<keyword id="KW-0694">RNA-binding</keyword>
<keyword id="KW-0699">rRNA-binding</keyword>
<proteinExistence type="inferred from homology"/>
<protein>
    <recommendedName>
        <fullName evidence="1">Large ribosomal subunit protein bL31</fullName>
    </recommendedName>
    <alternativeName>
        <fullName evidence="2">50S ribosomal protein L31</fullName>
    </alternativeName>
</protein>
<accession>Q3SNZ1</accession>
<dbReference type="EMBL" id="CP000115">
    <property type="protein sequence ID" value="ABA06000.1"/>
    <property type="molecule type" value="Genomic_DNA"/>
</dbReference>
<dbReference type="RefSeq" id="WP_011315945.1">
    <property type="nucleotide sequence ID" value="NC_007406.1"/>
</dbReference>
<dbReference type="SMR" id="Q3SNZ1"/>
<dbReference type="STRING" id="323098.Nwi_2747"/>
<dbReference type="KEGG" id="nwi:Nwi_2747"/>
<dbReference type="eggNOG" id="COG0254">
    <property type="taxonomic scope" value="Bacteria"/>
</dbReference>
<dbReference type="HOGENOM" id="CLU_114306_3_2_5"/>
<dbReference type="OrthoDB" id="9803251at2"/>
<dbReference type="Proteomes" id="UP000002531">
    <property type="component" value="Chromosome"/>
</dbReference>
<dbReference type="GO" id="GO:1990904">
    <property type="term" value="C:ribonucleoprotein complex"/>
    <property type="evidence" value="ECO:0007669"/>
    <property type="project" value="UniProtKB-KW"/>
</dbReference>
<dbReference type="GO" id="GO:0005840">
    <property type="term" value="C:ribosome"/>
    <property type="evidence" value="ECO:0007669"/>
    <property type="project" value="UniProtKB-KW"/>
</dbReference>
<dbReference type="GO" id="GO:0019843">
    <property type="term" value="F:rRNA binding"/>
    <property type="evidence" value="ECO:0007669"/>
    <property type="project" value="UniProtKB-KW"/>
</dbReference>
<dbReference type="GO" id="GO:0003735">
    <property type="term" value="F:structural constituent of ribosome"/>
    <property type="evidence" value="ECO:0007669"/>
    <property type="project" value="InterPro"/>
</dbReference>
<dbReference type="GO" id="GO:0006412">
    <property type="term" value="P:translation"/>
    <property type="evidence" value="ECO:0007669"/>
    <property type="project" value="UniProtKB-UniRule"/>
</dbReference>
<dbReference type="Gene3D" id="4.10.830.30">
    <property type="entry name" value="Ribosomal protein L31"/>
    <property type="match status" value="1"/>
</dbReference>
<dbReference type="HAMAP" id="MF_00501">
    <property type="entry name" value="Ribosomal_bL31_1"/>
    <property type="match status" value="1"/>
</dbReference>
<dbReference type="InterPro" id="IPR034704">
    <property type="entry name" value="Ribosomal_bL28/bL31-like_sf"/>
</dbReference>
<dbReference type="InterPro" id="IPR002150">
    <property type="entry name" value="Ribosomal_bL31"/>
</dbReference>
<dbReference type="InterPro" id="IPR027491">
    <property type="entry name" value="Ribosomal_bL31_A"/>
</dbReference>
<dbReference type="InterPro" id="IPR042105">
    <property type="entry name" value="Ribosomal_bL31_sf"/>
</dbReference>
<dbReference type="NCBIfam" id="TIGR00105">
    <property type="entry name" value="L31"/>
    <property type="match status" value="1"/>
</dbReference>
<dbReference type="NCBIfam" id="NF001809">
    <property type="entry name" value="PRK00528.1"/>
    <property type="match status" value="1"/>
</dbReference>
<dbReference type="PANTHER" id="PTHR33280">
    <property type="entry name" value="50S RIBOSOMAL PROTEIN L31, CHLOROPLASTIC"/>
    <property type="match status" value="1"/>
</dbReference>
<dbReference type="PANTHER" id="PTHR33280:SF6">
    <property type="entry name" value="LARGE RIBOSOMAL SUBUNIT PROTEIN BL31A"/>
    <property type="match status" value="1"/>
</dbReference>
<dbReference type="Pfam" id="PF01197">
    <property type="entry name" value="Ribosomal_L31"/>
    <property type="match status" value="1"/>
</dbReference>
<dbReference type="PRINTS" id="PR01249">
    <property type="entry name" value="RIBOSOMALL31"/>
</dbReference>
<dbReference type="SUPFAM" id="SSF143800">
    <property type="entry name" value="L28p-like"/>
    <property type="match status" value="1"/>
</dbReference>
<dbReference type="PROSITE" id="PS01143">
    <property type="entry name" value="RIBOSOMAL_L31"/>
    <property type="match status" value="1"/>
</dbReference>
<comment type="function">
    <text evidence="1">Binds the 23S rRNA.</text>
</comment>
<comment type="subunit">
    <text evidence="1">Part of the 50S ribosomal subunit.</text>
</comment>
<comment type="similarity">
    <text evidence="1">Belongs to the bacterial ribosomal protein bL31 family. Type A subfamily.</text>
</comment>
<gene>
    <name evidence="1" type="primary">rpmE</name>
    <name type="ordered locus">Nwi_2747</name>
</gene>